<accession>P12446</accession>
<feature type="chain" id="PRO_0000408878" description="Polyprotein p42">
    <location>
        <begin position="1"/>
        <end position="374"/>
    </location>
</feature>
<feature type="chain" id="PRO_0000078876" description="Protein M1'">
    <location>
        <begin position="1"/>
        <end position="259"/>
    </location>
</feature>
<feature type="chain" id="PRO_0000269906" description="Protein CM2">
    <location>
        <begin position="260"/>
        <end position="374"/>
    </location>
</feature>
<feature type="topological domain" description="Cytoplasmic" evidence="2">
    <location>
        <begin position="1"/>
        <end position="238"/>
    </location>
</feature>
<feature type="transmembrane region" description="Helical; Signal-anchor for type II membrane protein" evidence="2">
    <location>
        <begin position="239"/>
        <end position="259"/>
    </location>
</feature>
<feature type="topological domain" description="Extracellular" evidence="2">
    <location>
        <begin position="260"/>
        <end position="288"/>
    </location>
</feature>
<feature type="transmembrane region" description="Helical" evidence="2">
    <location>
        <begin position="289"/>
        <end position="309"/>
    </location>
</feature>
<feature type="topological domain" description="Cytoplasmic" evidence="2">
    <location>
        <begin position="310"/>
        <end position="374"/>
    </location>
</feature>
<feature type="site" description="Cleavage; by host signal peptidase">
    <location>
        <begin position="259"/>
        <end position="260"/>
    </location>
</feature>
<feature type="modified residue" description="Phosphoserine; by host" evidence="1">
    <location>
        <position position="337"/>
    </location>
</feature>
<feature type="modified residue" description="Phosphoserine; by host" evidence="1">
    <location>
        <position position="362"/>
    </location>
</feature>
<feature type="lipid moiety-binding region" description="S-palmitoyl cysteine; by host" evidence="1">
    <location>
        <position position="324"/>
    </location>
</feature>
<feature type="glycosylation site" description="N-linked (GlcNAc...) asparagine; by host" evidence="2">
    <location>
        <position position="270"/>
    </location>
</feature>
<feature type="glycosylation site" description="N-linked (GlcNAc...) asparagine; by host" evidence="2">
    <location>
        <position position="281"/>
    </location>
</feature>
<feature type="splice variant" id="VSP_022114" description="In isoform M1." evidence="3">
    <location>
        <begin position="243"/>
        <end position="374"/>
    </location>
</feature>
<organismHost>
    <name type="scientific">Homo sapiens</name>
    <name type="common">Human</name>
    <dbReference type="NCBI Taxonomy" id="9606"/>
</organismHost>
<organismHost>
    <name type="scientific">Sus scrofa</name>
    <name type="common">Pig</name>
    <dbReference type="NCBI Taxonomy" id="9823"/>
</organismHost>
<reference key="1">
    <citation type="journal article" date="1988" name="J. Virol.">
        <title>Evidence that the matrix protein of influenza C virus is coded for by a spliced mRNA.</title>
        <authorList>
            <person name="Yamashita M."/>
            <person name="Krystal M."/>
            <person name="Palese P."/>
        </authorList>
    </citation>
    <scope>NUCLEOTIDE SEQUENCE [GENOMIC RNA]</scope>
</reference>
<evidence type="ECO:0000250" key="1"/>
<evidence type="ECO:0000255" key="2"/>
<evidence type="ECO:0000305" key="3"/>
<protein>
    <recommendedName>
        <fullName>Polyprotein p42</fullName>
    </recommendedName>
    <component>
        <recommendedName>
            <fullName>Protein M1'</fullName>
        </recommendedName>
        <alternativeName>
            <fullName>CM1'</fullName>
        </alternativeName>
        <alternativeName>
            <fullName>p31</fullName>
        </alternativeName>
    </component>
    <component>
        <recommendedName>
            <fullName>Protein CM2</fullName>
        </recommendedName>
    </component>
</protein>
<dbReference type="EMBL" id="M22038">
    <property type="protein sequence ID" value="AAA43781.1"/>
    <property type="status" value="ALT_TERM"/>
    <property type="molecule type" value="Genomic_RNA"/>
</dbReference>
<dbReference type="PIR" id="A28878">
    <property type="entry name" value="MFIVCJ"/>
</dbReference>
<dbReference type="SMR" id="P12446"/>
<dbReference type="GlyCosmos" id="P12446">
    <property type="glycosylation" value="2 sites, No reported glycans"/>
</dbReference>
<dbReference type="GO" id="GO:0044167">
    <property type="term" value="C:host cell endoplasmic reticulum membrane"/>
    <property type="evidence" value="ECO:0007669"/>
    <property type="project" value="UniProtKB-SubCell"/>
</dbReference>
<dbReference type="GO" id="GO:0020002">
    <property type="term" value="C:host cell plasma membrane"/>
    <property type="evidence" value="ECO:0007669"/>
    <property type="project" value="UniProtKB-SubCell"/>
</dbReference>
<dbReference type="GO" id="GO:0016020">
    <property type="term" value="C:membrane"/>
    <property type="evidence" value="ECO:0007669"/>
    <property type="project" value="UniProtKB-KW"/>
</dbReference>
<dbReference type="GO" id="GO:0019028">
    <property type="term" value="C:viral capsid"/>
    <property type="evidence" value="ECO:0007669"/>
    <property type="project" value="InterPro"/>
</dbReference>
<dbReference type="GO" id="GO:0055036">
    <property type="term" value="C:virion membrane"/>
    <property type="evidence" value="ECO:0007669"/>
    <property type="project" value="UniProtKB-SubCell"/>
</dbReference>
<dbReference type="GO" id="GO:0015267">
    <property type="term" value="F:channel activity"/>
    <property type="evidence" value="ECO:0007669"/>
    <property type="project" value="UniProtKB-KW"/>
</dbReference>
<dbReference type="GO" id="GO:0039660">
    <property type="term" value="F:structural constituent of virion"/>
    <property type="evidence" value="ECO:0007669"/>
    <property type="project" value="UniProtKB-KW"/>
</dbReference>
<dbReference type="GO" id="GO:0034220">
    <property type="term" value="P:monoatomic ion transmembrane transport"/>
    <property type="evidence" value="ECO:0007669"/>
    <property type="project" value="UniProtKB-KW"/>
</dbReference>
<dbReference type="InterPro" id="IPR004271">
    <property type="entry name" value="CM1"/>
</dbReference>
<dbReference type="InterPro" id="IPR004267">
    <property type="entry name" value="CM2"/>
</dbReference>
<dbReference type="Pfam" id="PF03026">
    <property type="entry name" value="CM1"/>
    <property type="match status" value="1"/>
</dbReference>
<dbReference type="Pfam" id="PF03021">
    <property type="entry name" value="CM2"/>
    <property type="match status" value="1"/>
</dbReference>
<sequence>MAHEILIAETEAFLKNVAPETRTAIISAITGGKSACKSAAKLIKNEHLPLMSGEATTMHIVMRCLYPEIKPWKKASDMLNKATSSLKKSEGRDIRKQMKAAGDFLGVESMMKMRAFRDDQIMEMVEEVYDHPDDYTPDIRIGTITAWLRCKNKKSERYRSNVSESGRTALKIHEVRKASTAINEIAGITGLGEEALSLQRQTESLAILCNHTFGSNIMRPHLEKAIKGVEGRVGEMGRMAMKWLVVIICFSITSQPASACNLKTCLKLFNNTDAVTVHCFNETQGYMLTLASLGLGIITMLYLLVKIIIELVNGFVLGRWERWCGDIKTTIMPEIDSMEKDIALSRERLDLGEDAPDETDISPIPFSNDGIFEI</sequence>
<comment type="function">
    <text evidence="1">Ion channel, which might have a role in genome packaging and uncoating processes.</text>
</comment>
<comment type="subunit">
    <text evidence="1">Homodimer; disulfide-linked. Homotetramer; disulfide-linked.</text>
</comment>
<comment type="subcellular location">
    <molecule>Polyprotein p42</molecule>
    <subcellularLocation>
        <location evidence="3">Host endoplasmic reticulum membrane</location>
        <topology evidence="3">Multi-pass membrane protein</topology>
    </subcellularLocation>
</comment>
<comment type="subcellular location">
    <molecule>Protein M1'</molecule>
    <subcellularLocation>
        <location evidence="3">Virion membrane</location>
        <topology evidence="3">Single-pass type II membrane protein</topology>
    </subcellularLocation>
</comment>
<comment type="subcellular location">
    <molecule>Protein CM2</molecule>
    <subcellularLocation>
        <location evidence="3">Virion membrane</location>
        <topology evidence="3">Single-pass type I membrane protein</topology>
    </subcellularLocation>
    <subcellularLocation>
        <location evidence="3">Host cell membrane</location>
        <topology evidence="3">Single-pass type I membrane protein</topology>
    </subcellularLocation>
</comment>
<comment type="alternative products">
    <event type="alternative splicing"/>
    <isoform>
        <id>P12446-1</id>
        <name>p42</name>
        <sequence type="displayed"/>
    </isoform>
    <isoform>
        <id>P12446-2</id>
        <name>M1</name>
        <name>CM1</name>
        <sequence type="described" ref="VSP_022114"/>
    </isoform>
</comment>
<comment type="PTM">
    <text evidence="1">Palmitoylated.</text>
</comment>
<comment type="PTM">
    <text evidence="1">N-glycosylated.</text>
</comment>
<comment type="PTM">
    <text evidence="1">Ser-337 is the major site of phosphorylation, Ser-362 being a minor one.</text>
</comment>
<comment type="miscellaneous">
    <molecule>Isoform p42</molecule>
    <text>Produced by unspliced mRNA.</text>
</comment>
<comment type="similarity">
    <text evidence="3">Belongs to the influenza C protein M1 family.</text>
</comment>
<gene>
    <name type="primary">M</name>
</gene>
<keyword id="KW-0025">Alternative splicing</keyword>
<keyword id="KW-1015">Disulfide bond</keyword>
<keyword id="KW-0325">Glycoprotein</keyword>
<keyword id="KW-1032">Host cell membrane</keyword>
<keyword id="KW-1038">Host endoplasmic reticulum</keyword>
<keyword id="KW-1043">Host membrane</keyword>
<keyword id="KW-0407">Ion channel</keyword>
<keyword id="KW-0406">Ion transport</keyword>
<keyword id="KW-0449">Lipoprotein</keyword>
<keyword id="KW-0472">Membrane</keyword>
<keyword id="KW-0564">Palmitate</keyword>
<keyword id="KW-0597">Phosphoprotein</keyword>
<keyword id="KW-0735">Signal-anchor</keyword>
<keyword id="KW-0812">Transmembrane</keyword>
<keyword id="KW-1133">Transmembrane helix</keyword>
<keyword id="KW-0813">Transport</keyword>
<keyword id="KW-1182">Viral ion channel</keyword>
<keyword id="KW-0468">Viral matrix protein</keyword>
<keyword id="KW-0946">Virion</keyword>
<proteinExistence type="inferred from homology"/>
<name>MAT_INCJJ</name>
<organism>
    <name type="scientific">Influenza C virus (strain C/JJ/1950)</name>
    <dbReference type="NCBI Taxonomy" id="11560"/>
    <lineage>
        <taxon>Viruses</taxon>
        <taxon>Riboviria</taxon>
        <taxon>Orthornavirae</taxon>
        <taxon>Negarnaviricota</taxon>
        <taxon>Polyploviricotina</taxon>
        <taxon>Insthoviricetes</taxon>
        <taxon>Articulavirales</taxon>
        <taxon>Orthomyxoviridae</taxon>
        <taxon>Gammainfluenzavirus</taxon>
        <taxon>Gammainfluenzavirus influenzae</taxon>
        <taxon>Influenza C virus</taxon>
    </lineage>
</organism>